<gene>
    <name evidence="1" type="primary">mvk</name>
    <name type="ordered locus">MTH_46</name>
</gene>
<dbReference type="EC" id="2.7.1.36" evidence="1"/>
<dbReference type="EMBL" id="U47134">
    <property type="protein sequence ID" value="AAA87051.1"/>
    <property type="molecule type" value="Genomic_DNA"/>
</dbReference>
<dbReference type="EMBL" id="AE000666">
    <property type="protein sequence ID" value="AAB84553.1"/>
    <property type="molecule type" value="Genomic_DNA"/>
</dbReference>
<dbReference type="PIR" id="B69160">
    <property type="entry name" value="B69160"/>
</dbReference>
<dbReference type="RefSeq" id="WP_010875686.1">
    <property type="nucleotide sequence ID" value="NC_000916.1"/>
</dbReference>
<dbReference type="SMR" id="Q50559"/>
<dbReference type="FunCoup" id="Q50559">
    <property type="interactions" value="148"/>
</dbReference>
<dbReference type="STRING" id="187420.MTH_46"/>
<dbReference type="PaxDb" id="187420-MTH_46"/>
<dbReference type="EnsemblBacteria" id="AAB84553">
    <property type="protein sequence ID" value="AAB84553"/>
    <property type="gene ID" value="MTH_46"/>
</dbReference>
<dbReference type="GeneID" id="1470008"/>
<dbReference type="KEGG" id="mth:MTH_46"/>
<dbReference type="PATRIC" id="fig|187420.15.peg.44"/>
<dbReference type="HOGENOM" id="CLU_017814_0_0_2"/>
<dbReference type="InParanoid" id="Q50559"/>
<dbReference type="UniPathway" id="UPA00057">
    <property type="reaction ID" value="UER00098"/>
</dbReference>
<dbReference type="Proteomes" id="UP000005223">
    <property type="component" value="Chromosome"/>
</dbReference>
<dbReference type="GO" id="GO:0005829">
    <property type="term" value="C:cytosol"/>
    <property type="evidence" value="ECO:0007669"/>
    <property type="project" value="TreeGrafter"/>
</dbReference>
<dbReference type="GO" id="GO:0005524">
    <property type="term" value="F:ATP binding"/>
    <property type="evidence" value="ECO:0007669"/>
    <property type="project" value="UniProtKB-UniRule"/>
</dbReference>
<dbReference type="GO" id="GO:0000287">
    <property type="term" value="F:magnesium ion binding"/>
    <property type="evidence" value="ECO:0007669"/>
    <property type="project" value="UniProtKB-UniRule"/>
</dbReference>
<dbReference type="GO" id="GO:0004496">
    <property type="term" value="F:mevalonate kinase activity"/>
    <property type="evidence" value="ECO:0007669"/>
    <property type="project" value="UniProtKB-UniRule"/>
</dbReference>
<dbReference type="GO" id="GO:0019287">
    <property type="term" value="P:isopentenyl diphosphate biosynthetic process, mevalonate pathway"/>
    <property type="evidence" value="ECO:0007669"/>
    <property type="project" value="UniProtKB-UniRule"/>
</dbReference>
<dbReference type="Gene3D" id="3.30.230.10">
    <property type="match status" value="1"/>
</dbReference>
<dbReference type="Gene3D" id="3.30.70.890">
    <property type="entry name" value="GHMP kinase, C-terminal domain"/>
    <property type="match status" value="1"/>
</dbReference>
<dbReference type="HAMAP" id="MF_00217">
    <property type="entry name" value="Mevalonate_kinase"/>
    <property type="match status" value="1"/>
</dbReference>
<dbReference type="InterPro" id="IPR013750">
    <property type="entry name" value="GHMP_kinase_C_dom"/>
</dbReference>
<dbReference type="InterPro" id="IPR036554">
    <property type="entry name" value="GHMP_kinase_C_sf"/>
</dbReference>
<dbReference type="InterPro" id="IPR006204">
    <property type="entry name" value="GHMP_kinase_N_dom"/>
</dbReference>
<dbReference type="InterPro" id="IPR006203">
    <property type="entry name" value="GHMP_knse_ATP-bd_CS"/>
</dbReference>
<dbReference type="InterPro" id="IPR006205">
    <property type="entry name" value="Mev_gal_kin"/>
</dbReference>
<dbReference type="InterPro" id="IPR022937">
    <property type="entry name" value="Mevalonate_kinase_arc"/>
</dbReference>
<dbReference type="InterPro" id="IPR020568">
    <property type="entry name" value="Ribosomal_Su5_D2-typ_SF"/>
</dbReference>
<dbReference type="InterPro" id="IPR014721">
    <property type="entry name" value="Ribsml_uS5_D2-typ_fold_subgr"/>
</dbReference>
<dbReference type="NCBIfam" id="TIGR00549">
    <property type="entry name" value="mevalon_kin"/>
    <property type="match status" value="1"/>
</dbReference>
<dbReference type="PANTHER" id="PTHR43290">
    <property type="entry name" value="MEVALONATE KINASE"/>
    <property type="match status" value="1"/>
</dbReference>
<dbReference type="PANTHER" id="PTHR43290:SF2">
    <property type="entry name" value="MEVALONATE KINASE"/>
    <property type="match status" value="1"/>
</dbReference>
<dbReference type="Pfam" id="PF08544">
    <property type="entry name" value="GHMP_kinases_C"/>
    <property type="match status" value="1"/>
</dbReference>
<dbReference type="Pfam" id="PF00288">
    <property type="entry name" value="GHMP_kinases_N"/>
    <property type="match status" value="1"/>
</dbReference>
<dbReference type="PRINTS" id="PR00959">
    <property type="entry name" value="MEVGALKINASE"/>
</dbReference>
<dbReference type="SUPFAM" id="SSF55060">
    <property type="entry name" value="GHMP Kinase, C-terminal domain"/>
    <property type="match status" value="1"/>
</dbReference>
<dbReference type="SUPFAM" id="SSF54211">
    <property type="entry name" value="Ribosomal protein S5 domain 2-like"/>
    <property type="match status" value="1"/>
</dbReference>
<dbReference type="PROSITE" id="PS00627">
    <property type="entry name" value="GHMP_KINASES_ATP"/>
    <property type="match status" value="1"/>
</dbReference>
<keyword id="KW-0067">ATP-binding</keyword>
<keyword id="KW-0963">Cytoplasm</keyword>
<keyword id="KW-0414">Isoprene biosynthesis</keyword>
<keyword id="KW-0418">Kinase</keyword>
<keyword id="KW-0444">Lipid biosynthesis</keyword>
<keyword id="KW-0443">Lipid metabolism</keyword>
<keyword id="KW-0460">Magnesium</keyword>
<keyword id="KW-0547">Nucleotide-binding</keyword>
<keyword id="KW-1185">Reference proteome</keyword>
<keyword id="KW-0808">Transferase</keyword>
<feature type="chain" id="PRO_0000156666" description="Mevalonate kinase">
    <location>
        <begin position="1"/>
        <end position="303"/>
    </location>
</feature>
<feature type="active site" description="Proton acceptor" evidence="1">
    <location>
        <position position="141"/>
    </location>
</feature>
<feature type="binding site" evidence="1">
    <location>
        <begin position="90"/>
        <end position="100"/>
    </location>
    <ligand>
        <name>ATP</name>
        <dbReference type="ChEBI" id="CHEBI:30616"/>
    </ligand>
</feature>
<feature type="sequence conflict" description="In Ref. 2; AAB84553." evidence="2" ref="2">
    <original>A</original>
    <variation>P</variation>
    <location>
        <position position="108"/>
    </location>
</feature>
<proteinExistence type="inferred from homology"/>
<comment type="function">
    <text evidence="1">Catalyzes the phosphorylation of (R)-mevalonate (MVA) to (R)-mevalonate 5-phosphate (MVAP). Functions in the mevalonate (MVA) pathway leading to isopentenyl diphosphate (IPP), a key precursor for the biosynthesis of isoprenoid compounds such as archaeal membrane lipids.</text>
</comment>
<comment type="catalytic activity">
    <reaction evidence="1">
        <text>(R)-mevalonate + ATP = (R)-5-phosphomevalonate + ADP + H(+)</text>
        <dbReference type="Rhea" id="RHEA:17065"/>
        <dbReference type="ChEBI" id="CHEBI:15378"/>
        <dbReference type="ChEBI" id="CHEBI:30616"/>
        <dbReference type="ChEBI" id="CHEBI:36464"/>
        <dbReference type="ChEBI" id="CHEBI:58146"/>
        <dbReference type="ChEBI" id="CHEBI:456216"/>
        <dbReference type="EC" id="2.7.1.36"/>
    </reaction>
</comment>
<comment type="cofactor">
    <cofactor evidence="1">
        <name>Mg(2+)</name>
        <dbReference type="ChEBI" id="CHEBI:18420"/>
    </cofactor>
</comment>
<comment type="pathway">
    <text evidence="1">Isoprenoid biosynthesis; isopentenyl diphosphate biosynthesis via mevalonate pathway; isopentenyl diphosphate from (R)-mevalonate: step 1/3.</text>
</comment>
<comment type="subunit">
    <text evidence="1">Homodimer.</text>
</comment>
<comment type="subcellular location">
    <subcellularLocation>
        <location evidence="1">Cytoplasm</location>
    </subcellularLocation>
</comment>
<comment type="similarity">
    <text evidence="1">Belongs to the GHMP kinase family. Mevalonate kinase subfamily.</text>
</comment>
<name>MVK_METTH</name>
<sequence>MKSSASAPAKAILFGEHAVVYSKPAIAAAIDRRVTVTVSESSSTHVTIPSLGIRHSSERPSGGILDYIGRCLELYHDASPLDIRVEMEIPAGSGLGSSAALTVALIGALDRYHGRDHGPGETAARAHRVEVDVQGAASPLDTAISTYGGLVYLDSQRRVRQFEADLGDLVIAHLDYSGETARMVAGVAERFRRFPDIMGRIMDTVESITNTAYRELLRNNTEPLGELMNLNQGLLDSMGVSTRELSMMVYEARNAGAAGSKITGAGGGGSIIAHCPGCVDDVVTALNRNWKAMRAEFSVKGLI</sequence>
<accession>Q50559</accession>
<accession>O26152</accession>
<evidence type="ECO:0000255" key="1">
    <source>
        <dbReference type="HAMAP-Rule" id="MF_00217"/>
    </source>
</evidence>
<evidence type="ECO:0000305" key="2"/>
<protein>
    <recommendedName>
        <fullName evidence="1">Mevalonate kinase</fullName>
        <shortName evidence="1">MK</shortName>
        <shortName evidence="1">MVK</shortName>
        <ecNumber evidence="1">2.7.1.36</ecNumber>
    </recommendedName>
</protein>
<organism>
    <name type="scientific">Methanothermobacter thermautotrophicus (strain ATCC 29096 / DSM 1053 / JCM 10044 / NBRC 100330 / Delta H)</name>
    <name type="common">Methanobacterium thermoautotrophicum</name>
    <dbReference type="NCBI Taxonomy" id="187420"/>
    <lineage>
        <taxon>Archaea</taxon>
        <taxon>Methanobacteriati</taxon>
        <taxon>Methanobacteriota</taxon>
        <taxon>Methanomada group</taxon>
        <taxon>Methanobacteria</taxon>
        <taxon>Methanobacteriales</taxon>
        <taxon>Methanobacteriaceae</taxon>
        <taxon>Methanothermobacter</taxon>
    </lineage>
</organism>
<reference key="1">
    <citation type="submission" date="1996-01" db="EMBL/GenBank/DDBJ databases">
        <authorList>
            <person name="Sharma S."/>
            <person name="Reeve J.N."/>
        </authorList>
    </citation>
    <scope>NUCLEOTIDE SEQUENCE [GENOMIC DNA]</scope>
    <source>
        <strain>ATCC 29096 / DSM 1053 / JCM 10044 / NBRC 100330 / Delta H</strain>
    </source>
</reference>
<reference key="2">
    <citation type="journal article" date="1997" name="J. Bacteriol.">
        <title>Complete genome sequence of Methanobacterium thermoautotrophicum deltaH: functional analysis and comparative genomics.</title>
        <authorList>
            <person name="Smith D.R."/>
            <person name="Doucette-Stamm L.A."/>
            <person name="Deloughery C."/>
            <person name="Lee H.-M."/>
            <person name="Dubois J."/>
            <person name="Aldredge T."/>
            <person name="Bashirzadeh R."/>
            <person name="Blakely D."/>
            <person name="Cook R."/>
            <person name="Gilbert K."/>
            <person name="Harrison D."/>
            <person name="Hoang L."/>
            <person name="Keagle P."/>
            <person name="Lumm W."/>
            <person name="Pothier B."/>
            <person name="Qiu D."/>
            <person name="Spadafora R."/>
            <person name="Vicare R."/>
            <person name="Wang Y."/>
            <person name="Wierzbowski J."/>
            <person name="Gibson R."/>
            <person name="Jiwani N."/>
            <person name="Caruso A."/>
            <person name="Bush D."/>
            <person name="Safer H."/>
            <person name="Patwell D."/>
            <person name="Prabhakar S."/>
            <person name="McDougall S."/>
            <person name="Shimer G."/>
            <person name="Goyal A."/>
            <person name="Pietrovski S."/>
            <person name="Church G.M."/>
            <person name="Daniels C.J."/>
            <person name="Mao J.-I."/>
            <person name="Rice P."/>
            <person name="Noelling J."/>
            <person name="Reeve J.N."/>
        </authorList>
    </citation>
    <scope>NUCLEOTIDE SEQUENCE [LARGE SCALE GENOMIC DNA]</scope>
    <source>
        <strain>ATCC 29096 / DSM 1053 / JCM 10044 / NBRC 100330 / Delta H</strain>
    </source>
</reference>